<organism>
    <name type="scientific">Bigelowiella natans</name>
    <name type="common">Pedinomonas minutissima</name>
    <name type="synonym">Chlorarachnion sp. (strain CCMP621)</name>
    <dbReference type="NCBI Taxonomy" id="227086"/>
    <lineage>
        <taxon>Eukaryota</taxon>
        <taxon>Sar</taxon>
        <taxon>Rhizaria</taxon>
        <taxon>Cercozoa</taxon>
        <taxon>Chlorarachniophyceae</taxon>
        <taxon>Bigelowiella</taxon>
    </lineage>
</organism>
<feature type="chain" id="PRO_0000292262" description="Photosystem II reaction center protein J">
    <location>
        <begin position="1"/>
        <end position="44"/>
    </location>
</feature>
<feature type="transmembrane region" description="Helical" evidence="1">
    <location>
        <begin position="12"/>
        <end position="32"/>
    </location>
</feature>
<keyword id="KW-0150">Chloroplast</keyword>
<keyword id="KW-0472">Membrane</keyword>
<keyword id="KW-0602">Photosynthesis</keyword>
<keyword id="KW-0604">Photosystem II</keyword>
<keyword id="KW-0934">Plastid</keyword>
<keyword id="KW-0674">Reaction center</keyword>
<keyword id="KW-0793">Thylakoid</keyword>
<keyword id="KW-0812">Transmembrane</keyword>
<keyword id="KW-1133">Transmembrane helix</keyword>
<sequence>MKNSFIGTTGRIPLWIVGFVVGSLALGLLGILFYGSYTGLGSSL</sequence>
<evidence type="ECO:0000255" key="1">
    <source>
        <dbReference type="HAMAP-Rule" id="MF_01305"/>
    </source>
</evidence>
<evidence type="ECO:0000305" key="2"/>
<comment type="function">
    <text evidence="1">One of the components of the core complex of photosystem II (PSII). PSII is a light-driven water:plastoquinone oxidoreductase that uses light energy to abstract electrons from H(2)O, generating O(2) and a proton gradient subsequently used for ATP formation. It consists of a core antenna complex that captures photons, and an electron transfer chain that converts photonic excitation into a charge separation.</text>
</comment>
<comment type="subunit">
    <text evidence="2">PSII is composed of 1 copy each of membrane proteins PsbA, PsbB, PsbC, PsbD, PsbE, PsbF, PsbH, PsbI, PsbJ, PsbK, PsbL, PsbM, PsbT, PsbY, PsbZ, Psb30/Ycf12, at least 3 peripheral proteins of the oxygen-evolving complex and a large number of cofactors. It forms dimeric complexes.</text>
</comment>
<comment type="subcellular location">
    <subcellularLocation>
        <location evidence="1">Plastid</location>
        <location evidence="1">Chloroplast thylakoid membrane</location>
        <topology evidence="1">Single-pass membrane protein</topology>
    </subcellularLocation>
</comment>
<comment type="similarity">
    <text evidence="1">Belongs to the PsbJ family.</text>
</comment>
<gene>
    <name evidence="1" type="primary">psbJ</name>
</gene>
<name>PSBJ_BIGNA</name>
<proteinExistence type="inferred from homology"/>
<accession>Q06J14</accession>
<dbReference type="EMBL" id="DQ851108">
    <property type="protein sequence ID" value="ABG91445.1"/>
    <property type="molecule type" value="Genomic_DNA"/>
</dbReference>
<dbReference type="RefSeq" id="YP_778613.1">
    <property type="nucleotide sequence ID" value="NC_008408.1"/>
</dbReference>
<dbReference type="SMR" id="Q06J14"/>
<dbReference type="GeneID" id="4353030"/>
<dbReference type="GO" id="GO:0009535">
    <property type="term" value="C:chloroplast thylakoid membrane"/>
    <property type="evidence" value="ECO:0007669"/>
    <property type="project" value="UniProtKB-SubCell"/>
</dbReference>
<dbReference type="GO" id="GO:0009539">
    <property type="term" value="C:photosystem II reaction center"/>
    <property type="evidence" value="ECO:0007669"/>
    <property type="project" value="InterPro"/>
</dbReference>
<dbReference type="GO" id="GO:0015979">
    <property type="term" value="P:photosynthesis"/>
    <property type="evidence" value="ECO:0007669"/>
    <property type="project" value="UniProtKB-UniRule"/>
</dbReference>
<dbReference type="Gene3D" id="6.10.250.2070">
    <property type="match status" value="1"/>
</dbReference>
<dbReference type="HAMAP" id="MF_01305">
    <property type="entry name" value="PSII_PsbJ"/>
    <property type="match status" value="1"/>
</dbReference>
<dbReference type="InterPro" id="IPR002682">
    <property type="entry name" value="PSII_PsbJ"/>
</dbReference>
<dbReference type="InterPro" id="IPR037267">
    <property type="entry name" value="PSII_PsbJ_sf"/>
</dbReference>
<dbReference type="PANTHER" id="PTHR34812">
    <property type="entry name" value="PHOTOSYSTEM II REACTION CENTER PROTEIN J"/>
    <property type="match status" value="1"/>
</dbReference>
<dbReference type="PANTHER" id="PTHR34812:SF3">
    <property type="entry name" value="PHOTOSYSTEM II REACTION CENTER PROTEIN J"/>
    <property type="match status" value="1"/>
</dbReference>
<dbReference type="Pfam" id="PF01788">
    <property type="entry name" value="PsbJ"/>
    <property type="match status" value="1"/>
</dbReference>
<dbReference type="SUPFAM" id="SSF161021">
    <property type="entry name" value="Photosystem II reaction center protein J, PsbJ"/>
    <property type="match status" value="1"/>
</dbReference>
<geneLocation type="chloroplast"/>
<reference key="1">
    <citation type="journal article" date="2007" name="Mol. Biol. Evol.">
        <title>The complete chloroplast genome of the chlorarachniophyte Bigelowiella natans: evidence for independent origins of chlorarachniophyte and euglenid secondary endosymbionts.</title>
        <authorList>
            <person name="Rogers M.B."/>
            <person name="Gilson P.R."/>
            <person name="Su V."/>
            <person name="McFadden G.I."/>
            <person name="Keeling P.J."/>
        </authorList>
    </citation>
    <scope>NUCLEOTIDE SEQUENCE [LARGE SCALE GENOMIC DNA]</scope>
</reference>
<protein>
    <recommendedName>
        <fullName evidence="1">Photosystem II reaction center protein J</fullName>
        <shortName evidence="1">PSII-J</shortName>
    </recommendedName>
</protein>